<protein>
    <recommendedName>
        <fullName evidence="1">Phosphoglycerate kinase</fullName>
        <ecNumber evidence="1">2.7.2.3</ecNumber>
    </recommendedName>
</protein>
<keyword id="KW-0067">ATP-binding</keyword>
<keyword id="KW-0963">Cytoplasm</keyword>
<keyword id="KW-0324">Glycolysis</keyword>
<keyword id="KW-0418">Kinase</keyword>
<keyword id="KW-0547">Nucleotide-binding</keyword>
<keyword id="KW-0808">Transferase</keyword>
<name>PGK_STRPI</name>
<feature type="chain" id="PRO_1000096383" description="Phosphoglycerate kinase">
    <location>
        <begin position="1"/>
        <end position="398"/>
    </location>
</feature>
<feature type="binding site" evidence="1">
    <location>
        <begin position="21"/>
        <end position="23"/>
    </location>
    <ligand>
        <name>substrate</name>
    </ligand>
</feature>
<feature type="binding site" evidence="1">
    <location>
        <position position="36"/>
    </location>
    <ligand>
        <name>substrate</name>
    </ligand>
</feature>
<feature type="binding site" evidence="1">
    <location>
        <begin position="59"/>
        <end position="62"/>
    </location>
    <ligand>
        <name>substrate</name>
    </ligand>
</feature>
<feature type="binding site" evidence="1">
    <location>
        <position position="119"/>
    </location>
    <ligand>
        <name>substrate</name>
    </ligand>
</feature>
<feature type="binding site" evidence="1">
    <location>
        <position position="157"/>
    </location>
    <ligand>
        <name>substrate</name>
    </ligand>
</feature>
<feature type="binding site" evidence="1">
    <location>
        <position position="208"/>
    </location>
    <ligand>
        <name>ATP</name>
        <dbReference type="ChEBI" id="CHEBI:30616"/>
    </ligand>
</feature>
<feature type="binding site" evidence="1">
    <location>
        <position position="296"/>
    </location>
    <ligand>
        <name>ATP</name>
        <dbReference type="ChEBI" id="CHEBI:30616"/>
    </ligand>
</feature>
<feature type="binding site" evidence="1">
    <location>
        <position position="327"/>
    </location>
    <ligand>
        <name>ATP</name>
        <dbReference type="ChEBI" id="CHEBI:30616"/>
    </ligand>
</feature>
<feature type="binding site" evidence="1">
    <location>
        <begin position="354"/>
        <end position="357"/>
    </location>
    <ligand>
        <name>ATP</name>
        <dbReference type="ChEBI" id="CHEBI:30616"/>
    </ligand>
</feature>
<evidence type="ECO:0000255" key="1">
    <source>
        <dbReference type="HAMAP-Rule" id="MF_00145"/>
    </source>
</evidence>
<sequence>MAKLTVKDVDLKGKKVLVRVDFNVPLKDGVITNDNRITAALPTIKYIIEQGGRAILFSHLGRVKEEADKAGKSLAPVAADLAAKLGQDVVFPGVTRGAELEAAINALEDGQVLLVENTRYEDVDGKKESKNDPELGKYWASLGDGIFVNDAFGTAHRAHASNVGISANVEKAVAGFLLENEIAYIQEAVETPERPFVAILGGSKVSDKIGVIENLLEKADKVLIGGGMTYTFYKAQGIEIGNSLVEEDKLDVAKALLEKANGKLILPVDSKEANAFAGYTEVRDTEGEAVSEGFLGLDIGPKSIAKFDEALTGAKTVVWNGPMGVFENPDFQAGTIGVMDAIVKQPGVKSIIGGGDSAAAAINLGRADKFSWISTGGGASMELLEGKVLPGLAALTEK</sequence>
<gene>
    <name evidence="1" type="primary">pgk</name>
    <name type="ordered locus">SPH_0608</name>
</gene>
<accession>B1IA36</accession>
<proteinExistence type="inferred from homology"/>
<reference key="1">
    <citation type="journal article" date="2010" name="Genome Biol.">
        <title>Structure and dynamics of the pan-genome of Streptococcus pneumoniae and closely related species.</title>
        <authorList>
            <person name="Donati C."/>
            <person name="Hiller N.L."/>
            <person name="Tettelin H."/>
            <person name="Muzzi A."/>
            <person name="Croucher N.J."/>
            <person name="Angiuoli S.V."/>
            <person name="Oggioni M."/>
            <person name="Dunning Hotopp J.C."/>
            <person name="Hu F.Z."/>
            <person name="Riley D.R."/>
            <person name="Covacci A."/>
            <person name="Mitchell T.J."/>
            <person name="Bentley S.D."/>
            <person name="Kilian M."/>
            <person name="Ehrlich G.D."/>
            <person name="Rappuoli R."/>
            <person name="Moxon E.R."/>
            <person name="Masignani V."/>
        </authorList>
    </citation>
    <scope>NUCLEOTIDE SEQUENCE [LARGE SCALE GENOMIC DNA]</scope>
    <source>
        <strain>Hungary19A-6</strain>
    </source>
</reference>
<comment type="catalytic activity">
    <reaction evidence="1">
        <text>(2R)-3-phosphoglycerate + ATP = (2R)-3-phospho-glyceroyl phosphate + ADP</text>
        <dbReference type="Rhea" id="RHEA:14801"/>
        <dbReference type="ChEBI" id="CHEBI:30616"/>
        <dbReference type="ChEBI" id="CHEBI:57604"/>
        <dbReference type="ChEBI" id="CHEBI:58272"/>
        <dbReference type="ChEBI" id="CHEBI:456216"/>
        <dbReference type="EC" id="2.7.2.3"/>
    </reaction>
</comment>
<comment type="pathway">
    <text evidence="1">Carbohydrate degradation; glycolysis; pyruvate from D-glyceraldehyde 3-phosphate: step 2/5.</text>
</comment>
<comment type="subunit">
    <text evidence="1">Monomer.</text>
</comment>
<comment type="subcellular location">
    <subcellularLocation>
        <location evidence="1">Cytoplasm</location>
    </subcellularLocation>
</comment>
<comment type="similarity">
    <text evidence="1">Belongs to the phosphoglycerate kinase family.</text>
</comment>
<organism>
    <name type="scientific">Streptococcus pneumoniae (strain Hungary19A-6)</name>
    <dbReference type="NCBI Taxonomy" id="487214"/>
    <lineage>
        <taxon>Bacteria</taxon>
        <taxon>Bacillati</taxon>
        <taxon>Bacillota</taxon>
        <taxon>Bacilli</taxon>
        <taxon>Lactobacillales</taxon>
        <taxon>Streptococcaceae</taxon>
        <taxon>Streptococcus</taxon>
    </lineage>
</organism>
<dbReference type="EC" id="2.7.2.3" evidence="1"/>
<dbReference type="EMBL" id="CP000936">
    <property type="protein sequence ID" value="ACA37613.1"/>
    <property type="molecule type" value="Genomic_DNA"/>
</dbReference>
<dbReference type="RefSeq" id="WP_001096743.1">
    <property type="nucleotide sequence ID" value="NC_010380.1"/>
</dbReference>
<dbReference type="SMR" id="B1IA36"/>
<dbReference type="KEGG" id="spv:SPH_0608"/>
<dbReference type="HOGENOM" id="CLU_025427_0_1_9"/>
<dbReference type="UniPathway" id="UPA00109">
    <property type="reaction ID" value="UER00185"/>
</dbReference>
<dbReference type="Proteomes" id="UP000002163">
    <property type="component" value="Chromosome"/>
</dbReference>
<dbReference type="GO" id="GO:0005829">
    <property type="term" value="C:cytosol"/>
    <property type="evidence" value="ECO:0007669"/>
    <property type="project" value="TreeGrafter"/>
</dbReference>
<dbReference type="GO" id="GO:0043531">
    <property type="term" value="F:ADP binding"/>
    <property type="evidence" value="ECO:0007669"/>
    <property type="project" value="TreeGrafter"/>
</dbReference>
<dbReference type="GO" id="GO:0005524">
    <property type="term" value="F:ATP binding"/>
    <property type="evidence" value="ECO:0007669"/>
    <property type="project" value="UniProtKB-KW"/>
</dbReference>
<dbReference type="GO" id="GO:0004618">
    <property type="term" value="F:phosphoglycerate kinase activity"/>
    <property type="evidence" value="ECO:0007669"/>
    <property type="project" value="UniProtKB-UniRule"/>
</dbReference>
<dbReference type="GO" id="GO:0006094">
    <property type="term" value="P:gluconeogenesis"/>
    <property type="evidence" value="ECO:0007669"/>
    <property type="project" value="TreeGrafter"/>
</dbReference>
<dbReference type="GO" id="GO:0006096">
    <property type="term" value="P:glycolytic process"/>
    <property type="evidence" value="ECO:0007669"/>
    <property type="project" value="UniProtKB-UniRule"/>
</dbReference>
<dbReference type="FunFam" id="3.40.50.1260:FF:000001">
    <property type="entry name" value="Phosphoglycerate kinase"/>
    <property type="match status" value="1"/>
</dbReference>
<dbReference type="FunFam" id="3.40.50.1260:FF:000008">
    <property type="entry name" value="Phosphoglycerate kinase"/>
    <property type="match status" value="1"/>
</dbReference>
<dbReference type="Gene3D" id="3.40.50.1260">
    <property type="entry name" value="Phosphoglycerate kinase, N-terminal domain"/>
    <property type="match status" value="2"/>
</dbReference>
<dbReference type="HAMAP" id="MF_00145">
    <property type="entry name" value="Phosphoglyc_kinase"/>
    <property type="match status" value="1"/>
</dbReference>
<dbReference type="InterPro" id="IPR001576">
    <property type="entry name" value="Phosphoglycerate_kinase"/>
</dbReference>
<dbReference type="InterPro" id="IPR015911">
    <property type="entry name" value="Phosphoglycerate_kinase_CS"/>
</dbReference>
<dbReference type="InterPro" id="IPR015824">
    <property type="entry name" value="Phosphoglycerate_kinase_N"/>
</dbReference>
<dbReference type="InterPro" id="IPR036043">
    <property type="entry name" value="Phosphoglycerate_kinase_sf"/>
</dbReference>
<dbReference type="PANTHER" id="PTHR11406">
    <property type="entry name" value="PHOSPHOGLYCERATE KINASE"/>
    <property type="match status" value="1"/>
</dbReference>
<dbReference type="PANTHER" id="PTHR11406:SF23">
    <property type="entry name" value="PHOSPHOGLYCERATE KINASE 1, CHLOROPLASTIC-RELATED"/>
    <property type="match status" value="1"/>
</dbReference>
<dbReference type="Pfam" id="PF00162">
    <property type="entry name" value="PGK"/>
    <property type="match status" value="1"/>
</dbReference>
<dbReference type="PIRSF" id="PIRSF000724">
    <property type="entry name" value="Pgk"/>
    <property type="match status" value="1"/>
</dbReference>
<dbReference type="PRINTS" id="PR00477">
    <property type="entry name" value="PHGLYCKINASE"/>
</dbReference>
<dbReference type="SUPFAM" id="SSF53748">
    <property type="entry name" value="Phosphoglycerate kinase"/>
    <property type="match status" value="1"/>
</dbReference>
<dbReference type="PROSITE" id="PS00111">
    <property type="entry name" value="PGLYCERATE_KINASE"/>
    <property type="match status" value="1"/>
</dbReference>